<gene>
    <name evidence="1" type="primary">mraZ</name>
    <name type="ordered locus">STY0139</name>
    <name type="ordered locus">t0123</name>
</gene>
<proteinExistence type="inferred from homology"/>
<organism>
    <name type="scientific">Salmonella typhi</name>
    <dbReference type="NCBI Taxonomy" id="90370"/>
    <lineage>
        <taxon>Bacteria</taxon>
        <taxon>Pseudomonadati</taxon>
        <taxon>Pseudomonadota</taxon>
        <taxon>Gammaproteobacteria</taxon>
        <taxon>Enterobacterales</taxon>
        <taxon>Enterobacteriaceae</taxon>
        <taxon>Salmonella</taxon>
    </lineage>
</organism>
<evidence type="ECO:0000255" key="1">
    <source>
        <dbReference type="HAMAP-Rule" id="MF_01008"/>
    </source>
</evidence>
<evidence type="ECO:0000255" key="2">
    <source>
        <dbReference type="PROSITE-ProRule" id="PRU01076"/>
    </source>
</evidence>
<protein>
    <recommendedName>
        <fullName>Transcriptional regulator MraZ</fullName>
    </recommendedName>
</protein>
<sequence length="152" mass="17417">MFRGATLVNLDSKGRLTVPTRYREQLIESATGQIVCTIDIHHPCLLLYPLPEWEIIEQKLSRLSSMNPVERRVQRLLLGHASECQMDGAGRLLIAPVLRQHAGLTKEVMLVGQFNKFELWDETTWYQQVKEDIDAEQSATETLSERLQDLSL</sequence>
<feature type="chain" id="PRO_0000108531" description="Transcriptional regulator MraZ">
    <location>
        <begin position="1"/>
        <end position="152"/>
    </location>
</feature>
<feature type="domain" description="SpoVT-AbrB 1" evidence="2">
    <location>
        <begin position="5"/>
        <end position="52"/>
    </location>
</feature>
<feature type="domain" description="SpoVT-AbrB 2" evidence="2">
    <location>
        <begin position="81"/>
        <end position="124"/>
    </location>
</feature>
<keyword id="KW-0963">Cytoplasm</keyword>
<keyword id="KW-0238">DNA-binding</keyword>
<keyword id="KW-0677">Repeat</keyword>
<keyword id="KW-0678">Repressor</keyword>
<keyword id="KW-0804">Transcription</keyword>
<keyword id="KW-0805">Transcription regulation</keyword>
<reference key="1">
    <citation type="journal article" date="2001" name="Nature">
        <title>Complete genome sequence of a multiple drug resistant Salmonella enterica serovar Typhi CT18.</title>
        <authorList>
            <person name="Parkhill J."/>
            <person name="Dougan G."/>
            <person name="James K.D."/>
            <person name="Thomson N.R."/>
            <person name="Pickard D."/>
            <person name="Wain J."/>
            <person name="Churcher C.M."/>
            <person name="Mungall K.L."/>
            <person name="Bentley S.D."/>
            <person name="Holden M.T.G."/>
            <person name="Sebaihia M."/>
            <person name="Baker S."/>
            <person name="Basham D."/>
            <person name="Brooks K."/>
            <person name="Chillingworth T."/>
            <person name="Connerton P."/>
            <person name="Cronin A."/>
            <person name="Davis P."/>
            <person name="Davies R.M."/>
            <person name="Dowd L."/>
            <person name="White N."/>
            <person name="Farrar J."/>
            <person name="Feltwell T."/>
            <person name="Hamlin N."/>
            <person name="Haque A."/>
            <person name="Hien T.T."/>
            <person name="Holroyd S."/>
            <person name="Jagels K."/>
            <person name="Krogh A."/>
            <person name="Larsen T.S."/>
            <person name="Leather S."/>
            <person name="Moule S."/>
            <person name="O'Gaora P."/>
            <person name="Parry C."/>
            <person name="Quail M.A."/>
            <person name="Rutherford K.M."/>
            <person name="Simmonds M."/>
            <person name="Skelton J."/>
            <person name="Stevens K."/>
            <person name="Whitehead S."/>
            <person name="Barrell B.G."/>
        </authorList>
    </citation>
    <scope>NUCLEOTIDE SEQUENCE [LARGE SCALE GENOMIC DNA]</scope>
    <source>
        <strain>CT18</strain>
    </source>
</reference>
<reference key="2">
    <citation type="journal article" date="2003" name="J. Bacteriol.">
        <title>Comparative genomics of Salmonella enterica serovar Typhi strains Ty2 and CT18.</title>
        <authorList>
            <person name="Deng W."/>
            <person name="Liou S.-R."/>
            <person name="Plunkett G. III"/>
            <person name="Mayhew G.F."/>
            <person name="Rose D.J."/>
            <person name="Burland V."/>
            <person name="Kodoyianni V."/>
            <person name="Schwartz D.C."/>
            <person name="Blattner F.R."/>
        </authorList>
    </citation>
    <scope>NUCLEOTIDE SEQUENCE [LARGE SCALE GENOMIC DNA]</scope>
    <source>
        <strain>ATCC 700931 / Ty2</strain>
    </source>
</reference>
<comment type="function">
    <text evidence="1">Negatively regulates its own expression and that of the subsequent genes in the proximal part of the division and cell wall (dcw) gene cluster. Acts by binding directly to DNA. May also regulate the expression of genes outside the dcw cluster.</text>
</comment>
<comment type="subunit">
    <text evidence="1">Forms oligomers.</text>
</comment>
<comment type="subcellular location">
    <subcellularLocation>
        <location evidence="1">Cytoplasm</location>
        <location evidence="1">Nucleoid</location>
    </subcellularLocation>
</comment>
<comment type="similarity">
    <text evidence="1">Belongs to the MraZ family.</text>
</comment>
<dbReference type="EMBL" id="AL513382">
    <property type="protein sequence ID" value="CAD01276.1"/>
    <property type="molecule type" value="Genomic_DNA"/>
</dbReference>
<dbReference type="EMBL" id="AE014613">
    <property type="protein sequence ID" value="AAO67855.1"/>
    <property type="molecule type" value="Genomic_DNA"/>
</dbReference>
<dbReference type="RefSeq" id="NP_454731.1">
    <property type="nucleotide sequence ID" value="NC_003198.1"/>
</dbReference>
<dbReference type="RefSeq" id="WP_000488291.1">
    <property type="nucleotide sequence ID" value="NZ_WSUR01000009.1"/>
</dbReference>
<dbReference type="SMR" id="Q8Z9H5"/>
<dbReference type="STRING" id="220341.gene:17584178"/>
<dbReference type="KEGG" id="stt:t0123"/>
<dbReference type="KEGG" id="sty:STY0139"/>
<dbReference type="PATRIC" id="fig|220341.7.peg.139"/>
<dbReference type="eggNOG" id="COG2001">
    <property type="taxonomic scope" value="Bacteria"/>
</dbReference>
<dbReference type="HOGENOM" id="CLU_107907_2_0_6"/>
<dbReference type="OMA" id="ECELDGN"/>
<dbReference type="OrthoDB" id="9807753at2"/>
<dbReference type="Proteomes" id="UP000000541">
    <property type="component" value="Chromosome"/>
</dbReference>
<dbReference type="Proteomes" id="UP000002670">
    <property type="component" value="Chromosome"/>
</dbReference>
<dbReference type="GO" id="GO:0005737">
    <property type="term" value="C:cytoplasm"/>
    <property type="evidence" value="ECO:0007669"/>
    <property type="project" value="UniProtKB-UniRule"/>
</dbReference>
<dbReference type="GO" id="GO:0009295">
    <property type="term" value="C:nucleoid"/>
    <property type="evidence" value="ECO:0007669"/>
    <property type="project" value="UniProtKB-SubCell"/>
</dbReference>
<dbReference type="GO" id="GO:0003700">
    <property type="term" value="F:DNA-binding transcription factor activity"/>
    <property type="evidence" value="ECO:0007669"/>
    <property type="project" value="UniProtKB-UniRule"/>
</dbReference>
<dbReference type="GO" id="GO:0000976">
    <property type="term" value="F:transcription cis-regulatory region binding"/>
    <property type="evidence" value="ECO:0007669"/>
    <property type="project" value="TreeGrafter"/>
</dbReference>
<dbReference type="GO" id="GO:2000143">
    <property type="term" value="P:negative regulation of DNA-templated transcription initiation"/>
    <property type="evidence" value="ECO:0007669"/>
    <property type="project" value="TreeGrafter"/>
</dbReference>
<dbReference type="CDD" id="cd16321">
    <property type="entry name" value="MraZ_C"/>
    <property type="match status" value="1"/>
</dbReference>
<dbReference type="CDD" id="cd16320">
    <property type="entry name" value="MraZ_N"/>
    <property type="match status" value="1"/>
</dbReference>
<dbReference type="FunFam" id="3.40.1550.20:FF:000001">
    <property type="entry name" value="Transcriptional regulator MraZ"/>
    <property type="match status" value="1"/>
</dbReference>
<dbReference type="Gene3D" id="3.40.1550.20">
    <property type="entry name" value="Transcriptional regulator MraZ domain"/>
    <property type="match status" value="1"/>
</dbReference>
<dbReference type="HAMAP" id="MF_01008">
    <property type="entry name" value="MraZ"/>
    <property type="match status" value="1"/>
</dbReference>
<dbReference type="InterPro" id="IPR003444">
    <property type="entry name" value="MraZ"/>
</dbReference>
<dbReference type="InterPro" id="IPR035644">
    <property type="entry name" value="MraZ_C"/>
</dbReference>
<dbReference type="InterPro" id="IPR020603">
    <property type="entry name" value="MraZ_dom"/>
</dbReference>
<dbReference type="InterPro" id="IPR035642">
    <property type="entry name" value="MraZ_N"/>
</dbReference>
<dbReference type="InterPro" id="IPR038619">
    <property type="entry name" value="MraZ_sf"/>
</dbReference>
<dbReference type="InterPro" id="IPR007159">
    <property type="entry name" value="SpoVT-AbrB_dom"/>
</dbReference>
<dbReference type="InterPro" id="IPR037914">
    <property type="entry name" value="SpoVT-AbrB_sf"/>
</dbReference>
<dbReference type="NCBIfam" id="TIGR00242">
    <property type="entry name" value="division/cell wall cluster transcriptional repressor MraZ"/>
    <property type="match status" value="1"/>
</dbReference>
<dbReference type="PANTHER" id="PTHR34701">
    <property type="entry name" value="TRANSCRIPTIONAL REGULATOR MRAZ"/>
    <property type="match status" value="1"/>
</dbReference>
<dbReference type="PANTHER" id="PTHR34701:SF1">
    <property type="entry name" value="TRANSCRIPTIONAL REGULATOR MRAZ"/>
    <property type="match status" value="1"/>
</dbReference>
<dbReference type="Pfam" id="PF02381">
    <property type="entry name" value="MraZ"/>
    <property type="match status" value="2"/>
</dbReference>
<dbReference type="SUPFAM" id="SSF89447">
    <property type="entry name" value="AbrB/MazE/MraZ-like"/>
    <property type="match status" value="1"/>
</dbReference>
<dbReference type="PROSITE" id="PS51740">
    <property type="entry name" value="SPOVT_ABRB"/>
    <property type="match status" value="2"/>
</dbReference>
<name>MRAZ_SALTI</name>
<accession>Q8Z9H5</accession>